<name>MURA_AERS4</name>
<dbReference type="EC" id="2.5.1.7" evidence="1"/>
<dbReference type="EMBL" id="CP000644">
    <property type="protein sequence ID" value="ABO88487.1"/>
    <property type="molecule type" value="Genomic_DNA"/>
</dbReference>
<dbReference type="RefSeq" id="WP_005314435.1">
    <property type="nucleotide sequence ID" value="NC_009348.1"/>
</dbReference>
<dbReference type="SMR" id="A4SHW5"/>
<dbReference type="STRING" id="29491.GCA_000820065_03325"/>
<dbReference type="KEGG" id="asa:ASA_0303"/>
<dbReference type="eggNOG" id="COG0766">
    <property type="taxonomic scope" value="Bacteria"/>
</dbReference>
<dbReference type="HOGENOM" id="CLU_027387_0_0_6"/>
<dbReference type="UniPathway" id="UPA00219"/>
<dbReference type="Proteomes" id="UP000000225">
    <property type="component" value="Chromosome"/>
</dbReference>
<dbReference type="GO" id="GO:0005737">
    <property type="term" value="C:cytoplasm"/>
    <property type="evidence" value="ECO:0007669"/>
    <property type="project" value="UniProtKB-SubCell"/>
</dbReference>
<dbReference type="GO" id="GO:0008760">
    <property type="term" value="F:UDP-N-acetylglucosamine 1-carboxyvinyltransferase activity"/>
    <property type="evidence" value="ECO:0007669"/>
    <property type="project" value="UniProtKB-UniRule"/>
</dbReference>
<dbReference type="GO" id="GO:0051301">
    <property type="term" value="P:cell division"/>
    <property type="evidence" value="ECO:0007669"/>
    <property type="project" value="UniProtKB-KW"/>
</dbReference>
<dbReference type="GO" id="GO:0071555">
    <property type="term" value="P:cell wall organization"/>
    <property type="evidence" value="ECO:0007669"/>
    <property type="project" value="UniProtKB-KW"/>
</dbReference>
<dbReference type="GO" id="GO:0009252">
    <property type="term" value="P:peptidoglycan biosynthetic process"/>
    <property type="evidence" value="ECO:0007669"/>
    <property type="project" value="UniProtKB-UniRule"/>
</dbReference>
<dbReference type="GO" id="GO:0008360">
    <property type="term" value="P:regulation of cell shape"/>
    <property type="evidence" value="ECO:0007669"/>
    <property type="project" value="UniProtKB-KW"/>
</dbReference>
<dbReference type="GO" id="GO:0019277">
    <property type="term" value="P:UDP-N-acetylgalactosamine biosynthetic process"/>
    <property type="evidence" value="ECO:0007669"/>
    <property type="project" value="InterPro"/>
</dbReference>
<dbReference type="CDD" id="cd01555">
    <property type="entry name" value="UdpNAET"/>
    <property type="match status" value="1"/>
</dbReference>
<dbReference type="FunFam" id="3.65.10.10:FF:000002">
    <property type="entry name" value="UDP-N-acetylglucosamine 1-carboxyvinyltransferase"/>
    <property type="match status" value="1"/>
</dbReference>
<dbReference type="Gene3D" id="3.65.10.10">
    <property type="entry name" value="Enolpyruvate transferase domain"/>
    <property type="match status" value="2"/>
</dbReference>
<dbReference type="HAMAP" id="MF_00111">
    <property type="entry name" value="MurA"/>
    <property type="match status" value="1"/>
</dbReference>
<dbReference type="InterPro" id="IPR001986">
    <property type="entry name" value="Enolpyruvate_Tfrase_dom"/>
</dbReference>
<dbReference type="InterPro" id="IPR036968">
    <property type="entry name" value="Enolpyruvate_Tfrase_sf"/>
</dbReference>
<dbReference type="InterPro" id="IPR050068">
    <property type="entry name" value="MurA_subfamily"/>
</dbReference>
<dbReference type="InterPro" id="IPR013792">
    <property type="entry name" value="RNA3'P_cycl/enolpyr_Trfase_a/b"/>
</dbReference>
<dbReference type="InterPro" id="IPR005750">
    <property type="entry name" value="UDP_GlcNAc_COvinyl_MurA"/>
</dbReference>
<dbReference type="NCBIfam" id="TIGR01072">
    <property type="entry name" value="murA"/>
    <property type="match status" value="1"/>
</dbReference>
<dbReference type="NCBIfam" id="NF006873">
    <property type="entry name" value="PRK09369.1"/>
    <property type="match status" value="1"/>
</dbReference>
<dbReference type="PANTHER" id="PTHR43783">
    <property type="entry name" value="UDP-N-ACETYLGLUCOSAMINE 1-CARBOXYVINYLTRANSFERASE"/>
    <property type="match status" value="1"/>
</dbReference>
<dbReference type="PANTHER" id="PTHR43783:SF1">
    <property type="entry name" value="UDP-N-ACETYLGLUCOSAMINE 1-CARBOXYVINYLTRANSFERASE"/>
    <property type="match status" value="1"/>
</dbReference>
<dbReference type="Pfam" id="PF00275">
    <property type="entry name" value="EPSP_synthase"/>
    <property type="match status" value="1"/>
</dbReference>
<dbReference type="SUPFAM" id="SSF55205">
    <property type="entry name" value="EPT/RTPC-like"/>
    <property type="match status" value="1"/>
</dbReference>
<proteinExistence type="inferred from homology"/>
<evidence type="ECO:0000255" key="1">
    <source>
        <dbReference type="HAMAP-Rule" id="MF_00111"/>
    </source>
</evidence>
<feature type="chain" id="PRO_1000023015" description="UDP-N-acetylglucosamine 1-carboxyvinyltransferase">
    <location>
        <begin position="1"/>
        <end position="418"/>
    </location>
</feature>
<feature type="active site" description="Proton donor" evidence="1">
    <location>
        <position position="115"/>
    </location>
</feature>
<feature type="binding site" evidence="1">
    <location>
        <begin position="22"/>
        <end position="23"/>
    </location>
    <ligand>
        <name>phosphoenolpyruvate</name>
        <dbReference type="ChEBI" id="CHEBI:58702"/>
    </ligand>
</feature>
<feature type="binding site" evidence="1">
    <location>
        <position position="91"/>
    </location>
    <ligand>
        <name>UDP-N-acetyl-alpha-D-glucosamine</name>
        <dbReference type="ChEBI" id="CHEBI:57705"/>
    </ligand>
</feature>
<feature type="binding site" evidence="1">
    <location>
        <position position="305"/>
    </location>
    <ligand>
        <name>UDP-N-acetyl-alpha-D-glucosamine</name>
        <dbReference type="ChEBI" id="CHEBI:57705"/>
    </ligand>
</feature>
<feature type="binding site" evidence="1">
    <location>
        <position position="327"/>
    </location>
    <ligand>
        <name>UDP-N-acetyl-alpha-D-glucosamine</name>
        <dbReference type="ChEBI" id="CHEBI:57705"/>
    </ligand>
</feature>
<feature type="modified residue" description="2-(S-cysteinyl)pyruvic acid O-phosphothioketal" evidence="1">
    <location>
        <position position="115"/>
    </location>
</feature>
<sequence>MDKFKIDGRCTLNGEVTISGAKNAALPILFATLLCDEEIHLSNVPRLKDVGTTLKLLEMLGATTKVNGNVTVLTGAVNNHVAPYELVKTMRASILALGPLAARFGAADVSLPGGCAIGARPVNLHVHGLELMGAKIAIEDGYIKARVDGRLKGAHILMDMVSVTGTENLMMAATLADGRTVIENAAREPEVVDLANFLNALGAKVQGAGTDTLTIDGVERLHGGSYSVQPDRIETGTFLVGAAVTGGKVTCRKTDPSLLEAVLVKLEEAGALIEKGADWITLDMTGRTLKPVTIKTAPYPAFPTDMQAQFTVLNAVAKGTGMVTETIFENRFMHVPELVRMGADIELQGNVAICRDTEQLKGAQVMATDLRASASLVLAGFVAEGSTIVDRIYHIDRGYEDIEHKLQGLGGCIERIKG</sequence>
<organism>
    <name type="scientific">Aeromonas salmonicida (strain A449)</name>
    <dbReference type="NCBI Taxonomy" id="382245"/>
    <lineage>
        <taxon>Bacteria</taxon>
        <taxon>Pseudomonadati</taxon>
        <taxon>Pseudomonadota</taxon>
        <taxon>Gammaproteobacteria</taxon>
        <taxon>Aeromonadales</taxon>
        <taxon>Aeromonadaceae</taxon>
        <taxon>Aeromonas</taxon>
    </lineage>
</organism>
<keyword id="KW-0131">Cell cycle</keyword>
<keyword id="KW-0132">Cell division</keyword>
<keyword id="KW-0133">Cell shape</keyword>
<keyword id="KW-0961">Cell wall biogenesis/degradation</keyword>
<keyword id="KW-0963">Cytoplasm</keyword>
<keyword id="KW-0573">Peptidoglycan synthesis</keyword>
<keyword id="KW-0670">Pyruvate</keyword>
<keyword id="KW-0808">Transferase</keyword>
<protein>
    <recommendedName>
        <fullName evidence="1">UDP-N-acetylglucosamine 1-carboxyvinyltransferase</fullName>
        <ecNumber evidence="1">2.5.1.7</ecNumber>
    </recommendedName>
    <alternativeName>
        <fullName evidence="1">Enoylpyruvate transferase</fullName>
    </alternativeName>
    <alternativeName>
        <fullName evidence="1">UDP-N-acetylglucosamine enolpyruvyl transferase</fullName>
        <shortName evidence="1">EPT</shortName>
    </alternativeName>
</protein>
<comment type="function">
    <text evidence="1">Cell wall formation. Adds enolpyruvyl to UDP-N-acetylglucosamine.</text>
</comment>
<comment type="catalytic activity">
    <reaction evidence="1">
        <text>phosphoenolpyruvate + UDP-N-acetyl-alpha-D-glucosamine = UDP-N-acetyl-3-O-(1-carboxyvinyl)-alpha-D-glucosamine + phosphate</text>
        <dbReference type="Rhea" id="RHEA:18681"/>
        <dbReference type="ChEBI" id="CHEBI:43474"/>
        <dbReference type="ChEBI" id="CHEBI:57705"/>
        <dbReference type="ChEBI" id="CHEBI:58702"/>
        <dbReference type="ChEBI" id="CHEBI:68483"/>
        <dbReference type="EC" id="2.5.1.7"/>
    </reaction>
</comment>
<comment type="pathway">
    <text evidence="1">Cell wall biogenesis; peptidoglycan biosynthesis.</text>
</comment>
<comment type="subcellular location">
    <subcellularLocation>
        <location evidence="1">Cytoplasm</location>
    </subcellularLocation>
</comment>
<comment type="similarity">
    <text evidence="1">Belongs to the EPSP synthase family. MurA subfamily.</text>
</comment>
<gene>
    <name evidence="1" type="primary">murA</name>
    <name type="ordered locus">ASA_0303</name>
</gene>
<accession>A4SHW5</accession>
<reference key="1">
    <citation type="journal article" date="2008" name="BMC Genomics">
        <title>The genome of Aeromonas salmonicida subsp. salmonicida A449: insights into the evolution of a fish pathogen.</title>
        <authorList>
            <person name="Reith M.E."/>
            <person name="Singh R.K."/>
            <person name="Curtis B."/>
            <person name="Boyd J.M."/>
            <person name="Bouevitch A."/>
            <person name="Kimball J."/>
            <person name="Munholland J."/>
            <person name="Murphy C."/>
            <person name="Sarty D."/>
            <person name="Williams J."/>
            <person name="Nash J.H."/>
            <person name="Johnson S.C."/>
            <person name="Brown L.L."/>
        </authorList>
    </citation>
    <scope>NUCLEOTIDE SEQUENCE [LARGE SCALE GENOMIC DNA]</scope>
    <source>
        <strain>A449</strain>
    </source>
</reference>